<keyword id="KW-0997">Cell inner membrane</keyword>
<keyword id="KW-1003">Cell membrane</keyword>
<keyword id="KW-0133">Cell shape</keyword>
<keyword id="KW-0961">Cell wall biogenesis/degradation</keyword>
<keyword id="KW-0472">Membrane</keyword>
<keyword id="KW-0573">Peptidoglycan synthesis</keyword>
<keyword id="KW-1185">Reference proteome</keyword>
<keyword id="KW-0812">Transmembrane</keyword>
<keyword id="KW-1133">Transmembrane helix</keyword>
<keyword id="KW-0813">Transport</keyword>
<comment type="function">
    <text evidence="1">Involved in peptidoglycan biosynthesis. Transports lipid-linked peptidoglycan precursors from the inner to the outer leaflet of the cytoplasmic membrane.</text>
</comment>
<comment type="pathway">
    <text evidence="1">Cell wall biogenesis; peptidoglycan biosynthesis.</text>
</comment>
<comment type="subcellular location">
    <subcellularLocation>
        <location evidence="1">Cell inner membrane</location>
        <topology evidence="1">Multi-pass membrane protein</topology>
    </subcellularLocation>
</comment>
<comment type="similarity">
    <text evidence="1">Belongs to the MurJ/MviN family.</text>
</comment>
<protein>
    <recommendedName>
        <fullName evidence="1">Probable lipid II flippase MurJ</fullName>
    </recommendedName>
</protein>
<gene>
    <name evidence="1" type="primary">murJ</name>
    <name type="synonym">mviN</name>
    <name type="ordered locus">Z1707</name>
    <name type="ordered locus">ECs1447</name>
</gene>
<name>MURJ_ECO57</name>
<evidence type="ECO:0000255" key="1">
    <source>
        <dbReference type="HAMAP-Rule" id="MF_02078"/>
    </source>
</evidence>
<reference key="1">
    <citation type="journal article" date="2001" name="Nature">
        <title>Genome sequence of enterohaemorrhagic Escherichia coli O157:H7.</title>
        <authorList>
            <person name="Perna N.T."/>
            <person name="Plunkett G. III"/>
            <person name="Burland V."/>
            <person name="Mau B."/>
            <person name="Glasner J.D."/>
            <person name="Rose D.J."/>
            <person name="Mayhew G.F."/>
            <person name="Evans P.S."/>
            <person name="Gregor J."/>
            <person name="Kirkpatrick H.A."/>
            <person name="Posfai G."/>
            <person name="Hackett J."/>
            <person name="Klink S."/>
            <person name="Boutin A."/>
            <person name="Shao Y."/>
            <person name="Miller L."/>
            <person name="Grotbeck E.J."/>
            <person name="Davis N.W."/>
            <person name="Lim A."/>
            <person name="Dimalanta E.T."/>
            <person name="Potamousis K."/>
            <person name="Apodaca J."/>
            <person name="Anantharaman T.S."/>
            <person name="Lin J."/>
            <person name="Yen G."/>
            <person name="Schwartz D.C."/>
            <person name="Welch R.A."/>
            <person name="Blattner F.R."/>
        </authorList>
    </citation>
    <scope>NUCLEOTIDE SEQUENCE [LARGE SCALE GENOMIC DNA]</scope>
    <source>
        <strain>O157:H7 / EDL933 / ATCC 700927 / EHEC</strain>
    </source>
</reference>
<reference key="2">
    <citation type="journal article" date="2001" name="DNA Res.">
        <title>Complete genome sequence of enterohemorrhagic Escherichia coli O157:H7 and genomic comparison with a laboratory strain K-12.</title>
        <authorList>
            <person name="Hayashi T."/>
            <person name="Makino K."/>
            <person name="Ohnishi M."/>
            <person name="Kurokawa K."/>
            <person name="Ishii K."/>
            <person name="Yokoyama K."/>
            <person name="Han C.-G."/>
            <person name="Ohtsubo E."/>
            <person name="Nakayama K."/>
            <person name="Murata T."/>
            <person name="Tanaka M."/>
            <person name="Tobe T."/>
            <person name="Iida T."/>
            <person name="Takami H."/>
            <person name="Honda T."/>
            <person name="Sasakawa C."/>
            <person name="Ogasawara N."/>
            <person name="Yasunaga T."/>
            <person name="Kuhara S."/>
            <person name="Shiba T."/>
            <person name="Hattori M."/>
            <person name="Shinagawa H."/>
        </authorList>
    </citation>
    <scope>NUCLEOTIDE SEQUENCE [LARGE SCALE GENOMIC DNA]</scope>
    <source>
        <strain>O157:H7 / Sakai / RIMD 0509952 / EHEC</strain>
    </source>
</reference>
<proteinExistence type="inferred from homology"/>
<dbReference type="EMBL" id="AE005174">
    <property type="protein sequence ID" value="AAG55815.1"/>
    <property type="molecule type" value="Genomic_DNA"/>
</dbReference>
<dbReference type="EMBL" id="BA000007">
    <property type="protein sequence ID" value="BAB34870.1"/>
    <property type="molecule type" value="Genomic_DNA"/>
</dbReference>
<dbReference type="PIR" id="G90809">
    <property type="entry name" value="G90809"/>
</dbReference>
<dbReference type="RefSeq" id="NP_309474.1">
    <property type="nucleotide sequence ID" value="NC_002695.1"/>
</dbReference>
<dbReference type="RefSeq" id="WP_001050683.1">
    <property type="nucleotide sequence ID" value="NZ_VOAI01000018.1"/>
</dbReference>
<dbReference type="SMR" id="P0AF17"/>
<dbReference type="STRING" id="155864.Z1707"/>
<dbReference type="GeneID" id="75203656"/>
<dbReference type="GeneID" id="912988"/>
<dbReference type="KEGG" id="ece:Z1707"/>
<dbReference type="KEGG" id="ecs:ECs_1447"/>
<dbReference type="PATRIC" id="fig|386585.9.peg.1548"/>
<dbReference type="eggNOG" id="COG0728">
    <property type="taxonomic scope" value="Bacteria"/>
</dbReference>
<dbReference type="HOGENOM" id="CLU_006797_5_3_6"/>
<dbReference type="OMA" id="INFWYLL"/>
<dbReference type="UniPathway" id="UPA00219"/>
<dbReference type="Proteomes" id="UP000000558">
    <property type="component" value="Chromosome"/>
</dbReference>
<dbReference type="Proteomes" id="UP000002519">
    <property type="component" value="Chromosome"/>
</dbReference>
<dbReference type="GO" id="GO:0005886">
    <property type="term" value="C:plasma membrane"/>
    <property type="evidence" value="ECO:0007669"/>
    <property type="project" value="UniProtKB-SubCell"/>
</dbReference>
<dbReference type="GO" id="GO:0015648">
    <property type="term" value="F:lipid-linked peptidoglycan transporter activity"/>
    <property type="evidence" value="ECO:0007669"/>
    <property type="project" value="UniProtKB-UniRule"/>
</dbReference>
<dbReference type="GO" id="GO:0071555">
    <property type="term" value="P:cell wall organization"/>
    <property type="evidence" value="ECO:0007669"/>
    <property type="project" value="UniProtKB-KW"/>
</dbReference>
<dbReference type="GO" id="GO:0034204">
    <property type="term" value="P:lipid translocation"/>
    <property type="evidence" value="ECO:0007669"/>
    <property type="project" value="TreeGrafter"/>
</dbReference>
<dbReference type="GO" id="GO:0009252">
    <property type="term" value="P:peptidoglycan biosynthetic process"/>
    <property type="evidence" value="ECO:0007669"/>
    <property type="project" value="UniProtKB-UniRule"/>
</dbReference>
<dbReference type="GO" id="GO:0008360">
    <property type="term" value="P:regulation of cell shape"/>
    <property type="evidence" value="ECO:0007669"/>
    <property type="project" value="UniProtKB-KW"/>
</dbReference>
<dbReference type="CDD" id="cd13123">
    <property type="entry name" value="MATE_MurJ_like"/>
    <property type="match status" value="1"/>
</dbReference>
<dbReference type="HAMAP" id="MF_02078">
    <property type="entry name" value="MurJ_MviN"/>
    <property type="match status" value="1"/>
</dbReference>
<dbReference type="InterPro" id="IPR051050">
    <property type="entry name" value="Lipid_II_flippase_MurJ/MviN"/>
</dbReference>
<dbReference type="InterPro" id="IPR004268">
    <property type="entry name" value="MurJ"/>
</dbReference>
<dbReference type="NCBIfam" id="TIGR01695">
    <property type="entry name" value="murJ_mviN"/>
    <property type="match status" value="1"/>
</dbReference>
<dbReference type="PANTHER" id="PTHR47019">
    <property type="entry name" value="LIPID II FLIPPASE MURJ"/>
    <property type="match status" value="1"/>
</dbReference>
<dbReference type="PANTHER" id="PTHR47019:SF1">
    <property type="entry name" value="LIPID II FLIPPASE MURJ"/>
    <property type="match status" value="1"/>
</dbReference>
<dbReference type="Pfam" id="PF03023">
    <property type="entry name" value="MurJ"/>
    <property type="match status" value="1"/>
</dbReference>
<dbReference type="PIRSF" id="PIRSF002869">
    <property type="entry name" value="MviN"/>
    <property type="match status" value="1"/>
</dbReference>
<dbReference type="PRINTS" id="PR01806">
    <property type="entry name" value="VIRFACTRMVIN"/>
</dbReference>
<sequence length="511" mass="55267">MNLLKSLAAVSSMTMFSRVLGFARDAIVARIFGAGMATDAFFVAFKLPNLLRRIFAEGAFSQAFVPILAEYKSKQGEDATRVFVSYVSGLLTLALAVVTVAGMLAAPWVIMVTAPGFADTADKFALTSQLLKITFPYILLISLASLVGAILNTWNRFSIPAFAPTLLNISMIGFALFAAPYFNPPVLALAWAVTVGGVLQLVYQLPHLKKIGMLVLPRINFHDAGAMRVVKQMGPAILGVSVSQISLIINTIFASFLASGSVSWMYYADRLMEFPSGVLGVALGTILLPSLSKSFASGNHDEYNRLMDWGLRLCFLLALPSAVALGILSGPLTVSLFQYGKFTAFDALMTQRALIAYSVGLIGLIVVKVLAPGFYSRQDIKTPVKIAIVTLILTQLMNLAFIGPLKHAGLSLSIGLAACLNASLLYWQLRKQKIFTPQPGWMAFLLRLVVAVLVMSGVLLGMLHIMPEWSLGTMPWRLLRLMAVVLAGIAAYFAALAVLGFKVKEFARRTV</sequence>
<feature type="chain" id="PRO_0000182007" description="Probable lipid II flippase MurJ">
    <location>
        <begin position="1"/>
        <end position="511"/>
    </location>
</feature>
<feature type="transmembrane region" description="Helical" evidence="1">
    <location>
        <begin position="31"/>
        <end position="51"/>
    </location>
</feature>
<feature type="transmembrane region" description="Helical" evidence="1">
    <location>
        <begin position="90"/>
        <end position="110"/>
    </location>
</feature>
<feature type="transmembrane region" description="Helical" evidence="1">
    <location>
        <begin position="130"/>
        <end position="150"/>
    </location>
</feature>
<feature type="transmembrane region" description="Helical" evidence="1">
    <location>
        <begin position="159"/>
        <end position="179"/>
    </location>
</feature>
<feature type="transmembrane region" description="Helical" evidence="1">
    <location>
        <begin position="182"/>
        <end position="202"/>
    </location>
</feature>
<feature type="transmembrane region" description="Helical" evidence="1">
    <location>
        <begin position="237"/>
        <end position="257"/>
    </location>
</feature>
<feature type="transmembrane region" description="Helical" evidence="1">
    <location>
        <begin position="271"/>
        <end position="291"/>
    </location>
</feature>
<feature type="transmembrane region" description="Helical" evidence="1">
    <location>
        <begin position="314"/>
        <end position="334"/>
    </location>
</feature>
<feature type="transmembrane region" description="Helical" evidence="1">
    <location>
        <begin position="354"/>
        <end position="374"/>
    </location>
</feature>
<feature type="transmembrane region" description="Helical" evidence="1">
    <location>
        <begin position="383"/>
        <end position="403"/>
    </location>
</feature>
<feature type="transmembrane region" description="Helical" evidence="1">
    <location>
        <begin position="407"/>
        <end position="427"/>
    </location>
</feature>
<feature type="transmembrane region" description="Helical" evidence="1">
    <location>
        <begin position="443"/>
        <end position="463"/>
    </location>
</feature>
<feature type="transmembrane region" description="Helical" evidence="1">
    <location>
        <begin position="481"/>
        <end position="501"/>
    </location>
</feature>
<organism>
    <name type="scientific">Escherichia coli O157:H7</name>
    <dbReference type="NCBI Taxonomy" id="83334"/>
    <lineage>
        <taxon>Bacteria</taxon>
        <taxon>Pseudomonadati</taxon>
        <taxon>Pseudomonadota</taxon>
        <taxon>Gammaproteobacteria</taxon>
        <taxon>Enterobacterales</taxon>
        <taxon>Enterobacteriaceae</taxon>
        <taxon>Escherichia</taxon>
    </lineage>
</organism>
<accession>P0AF17</accession>
<accession>P75932</accession>